<organism>
    <name type="scientific">Staphylococcus aureus (strain Mu50 / ATCC 700699)</name>
    <dbReference type="NCBI Taxonomy" id="158878"/>
    <lineage>
        <taxon>Bacteria</taxon>
        <taxon>Bacillati</taxon>
        <taxon>Bacillota</taxon>
        <taxon>Bacilli</taxon>
        <taxon>Bacillales</taxon>
        <taxon>Staphylococcaceae</taxon>
        <taxon>Staphylococcus</taxon>
    </lineage>
</organism>
<proteinExistence type="inferred from homology"/>
<sequence>MASLKEIDTRIKSTKKMKQITKAMNMVSSSKLRRAEKNTKQFTPYMDKMQDAITAVAGASSNTNHPMLRPRKITRSGYLVITSDKGLAGAYSANVLKKLITDIEAKHQDSSEYSIVVLGQQGVDFLKNRGYDIEYSQVDVPDQPSFKSVQALANHAIDLYSEEEIDELNIYYSHYVSVLENKPTSRQVLPLSQEDSSKGHGHLSSYEFEPDKESILSVILPQYVESLIYGTILDAKASEHATRMTAMKNATDNATELIDDLSLEYNRARQAEITQQITEIVGGSAALE</sequence>
<comment type="function">
    <text evidence="1">Produces ATP from ADP in the presence of a proton gradient across the membrane. The gamma chain is believed to be important in regulating ATPase activity and the flow of protons through the CF(0) complex.</text>
</comment>
<comment type="subunit">
    <text evidence="1">F-type ATPases have 2 components, CF(1) - the catalytic core - and CF(0) - the membrane proton channel. CF(1) has five subunits: alpha(3), beta(3), gamma(1), delta(1), epsilon(1). CF(0) has three main subunits: a, b and c.</text>
</comment>
<comment type="subcellular location">
    <subcellularLocation>
        <location evidence="1">Cell membrane</location>
        <topology evidence="1">Peripheral membrane protein</topology>
    </subcellularLocation>
</comment>
<comment type="similarity">
    <text evidence="1">Belongs to the ATPase gamma chain family.</text>
</comment>
<reference key="1">
    <citation type="journal article" date="2001" name="Lancet">
        <title>Whole genome sequencing of meticillin-resistant Staphylococcus aureus.</title>
        <authorList>
            <person name="Kuroda M."/>
            <person name="Ohta T."/>
            <person name="Uchiyama I."/>
            <person name="Baba T."/>
            <person name="Yuzawa H."/>
            <person name="Kobayashi I."/>
            <person name="Cui L."/>
            <person name="Oguchi A."/>
            <person name="Aoki K."/>
            <person name="Nagai Y."/>
            <person name="Lian J.-Q."/>
            <person name="Ito T."/>
            <person name="Kanamori M."/>
            <person name="Matsumaru H."/>
            <person name="Maruyama A."/>
            <person name="Murakami H."/>
            <person name="Hosoyama A."/>
            <person name="Mizutani-Ui Y."/>
            <person name="Takahashi N.K."/>
            <person name="Sawano T."/>
            <person name="Inoue R."/>
            <person name="Kaito C."/>
            <person name="Sekimizu K."/>
            <person name="Hirakawa H."/>
            <person name="Kuhara S."/>
            <person name="Goto S."/>
            <person name="Yabuzaki J."/>
            <person name="Kanehisa M."/>
            <person name="Yamashita A."/>
            <person name="Oshima K."/>
            <person name="Furuya K."/>
            <person name="Yoshino C."/>
            <person name="Shiba T."/>
            <person name="Hattori M."/>
            <person name="Ogasawara N."/>
            <person name="Hayashi H."/>
            <person name="Hiramatsu K."/>
        </authorList>
    </citation>
    <scope>NUCLEOTIDE SEQUENCE [LARGE SCALE GENOMIC DNA]</scope>
    <source>
        <strain>Mu50 / ATCC 700699</strain>
    </source>
</reference>
<feature type="chain" id="PRO_0000073376" description="ATP synthase gamma chain">
    <location>
        <begin position="1"/>
        <end position="288"/>
    </location>
</feature>
<dbReference type="EMBL" id="BA000017">
    <property type="protein sequence ID" value="BAB58266.1"/>
    <property type="molecule type" value="Genomic_DNA"/>
</dbReference>
<dbReference type="RefSeq" id="WP_000157603.1">
    <property type="nucleotide sequence ID" value="NC_002758.2"/>
</dbReference>
<dbReference type="SMR" id="Q99SF4"/>
<dbReference type="GeneID" id="98346411"/>
<dbReference type="KEGG" id="sav:SAV2104"/>
<dbReference type="HOGENOM" id="CLU_050669_0_1_9"/>
<dbReference type="PhylomeDB" id="Q99SF4"/>
<dbReference type="Proteomes" id="UP000002481">
    <property type="component" value="Chromosome"/>
</dbReference>
<dbReference type="GO" id="GO:0005886">
    <property type="term" value="C:plasma membrane"/>
    <property type="evidence" value="ECO:0007669"/>
    <property type="project" value="UniProtKB-SubCell"/>
</dbReference>
<dbReference type="GO" id="GO:0045259">
    <property type="term" value="C:proton-transporting ATP synthase complex"/>
    <property type="evidence" value="ECO:0007669"/>
    <property type="project" value="UniProtKB-KW"/>
</dbReference>
<dbReference type="GO" id="GO:0005524">
    <property type="term" value="F:ATP binding"/>
    <property type="evidence" value="ECO:0007669"/>
    <property type="project" value="UniProtKB-UniRule"/>
</dbReference>
<dbReference type="GO" id="GO:0046933">
    <property type="term" value="F:proton-transporting ATP synthase activity, rotational mechanism"/>
    <property type="evidence" value="ECO:0007669"/>
    <property type="project" value="UniProtKB-UniRule"/>
</dbReference>
<dbReference type="GO" id="GO:0042777">
    <property type="term" value="P:proton motive force-driven plasma membrane ATP synthesis"/>
    <property type="evidence" value="ECO:0007669"/>
    <property type="project" value="UniProtKB-UniRule"/>
</dbReference>
<dbReference type="CDD" id="cd12151">
    <property type="entry name" value="F1-ATPase_gamma"/>
    <property type="match status" value="1"/>
</dbReference>
<dbReference type="FunFam" id="1.10.287.80:FF:000019">
    <property type="entry name" value="ATP synthase gamma chain"/>
    <property type="match status" value="1"/>
</dbReference>
<dbReference type="FunFam" id="3.40.1380.10:FF:000002">
    <property type="entry name" value="ATP synthase gamma chain"/>
    <property type="match status" value="1"/>
</dbReference>
<dbReference type="Gene3D" id="3.40.1380.10">
    <property type="match status" value="1"/>
</dbReference>
<dbReference type="Gene3D" id="1.10.287.80">
    <property type="entry name" value="ATP synthase, gamma subunit, helix hairpin domain"/>
    <property type="match status" value="1"/>
</dbReference>
<dbReference type="HAMAP" id="MF_00815">
    <property type="entry name" value="ATP_synth_gamma_bact"/>
    <property type="match status" value="1"/>
</dbReference>
<dbReference type="InterPro" id="IPR035968">
    <property type="entry name" value="ATP_synth_F1_ATPase_gsu"/>
</dbReference>
<dbReference type="InterPro" id="IPR000131">
    <property type="entry name" value="ATP_synth_F1_gsu"/>
</dbReference>
<dbReference type="NCBIfam" id="TIGR01146">
    <property type="entry name" value="ATPsyn_F1gamma"/>
    <property type="match status" value="1"/>
</dbReference>
<dbReference type="PANTHER" id="PTHR11693">
    <property type="entry name" value="ATP SYNTHASE GAMMA CHAIN"/>
    <property type="match status" value="1"/>
</dbReference>
<dbReference type="PANTHER" id="PTHR11693:SF22">
    <property type="entry name" value="ATP SYNTHASE SUBUNIT GAMMA, MITOCHONDRIAL"/>
    <property type="match status" value="1"/>
</dbReference>
<dbReference type="Pfam" id="PF00231">
    <property type="entry name" value="ATP-synt"/>
    <property type="match status" value="1"/>
</dbReference>
<dbReference type="PRINTS" id="PR00126">
    <property type="entry name" value="ATPASEGAMMA"/>
</dbReference>
<dbReference type="SUPFAM" id="SSF52943">
    <property type="entry name" value="ATP synthase (F1-ATPase), gamma subunit"/>
    <property type="match status" value="1"/>
</dbReference>
<accession>Q99SF4</accession>
<gene>
    <name evidence="1" type="primary">atpG</name>
    <name type="ordered locus">SAV2104</name>
</gene>
<protein>
    <recommendedName>
        <fullName evidence="1">ATP synthase gamma chain</fullName>
    </recommendedName>
    <alternativeName>
        <fullName evidence="1">ATP synthase F1 sector gamma subunit</fullName>
    </alternativeName>
    <alternativeName>
        <fullName evidence="1">F-ATPase gamma subunit</fullName>
    </alternativeName>
</protein>
<name>ATPG_STAAM</name>
<evidence type="ECO:0000255" key="1">
    <source>
        <dbReference type="HAMAP-Rule" id="MF_00815"/>
    </source>
</evidence>
<keyword id="KW-0066">ATP synthesis</keyword>
<keyword id="KW-1003">Cell membrane</keyword>
<keyword id="KW-0139">CF(1)</keyword>
<keyword id="KW-0375">Hydrogen ion transport</keyword>
<keyword id="KW-0406">Ion transport</keyword>
<keyword id="KW-0472">Membrane</keyword>
<keyword id="KW-0813">Transport</keyword>